<protein>
    <recommendedName>
        <fullName>Putative glycine dehydrogenase (decarboxylating), mitochondrial</fullName>
        <ecNumber>1.4.4.2</ecNumber>
    </recommendedName>
    <alternativeName>
        <fullName>Glycine cleavage system P protein</fullName>
    </alternativeName>
    <alternativeName>
        <fullName>Glycine decarboxylase</fullName>
    </alternativeName>
    <alternativeName>
        <fullName>Glycine dehydrogenase (aminomethyl-transferring)</fullName>
    </alternativeName>
</protein>
<name>GCSP_SCHPO</name>
<proteinExistence type="inferred from homology"/>
<comment type="function">
    <text>The glycine cleavage system catalyzes the degradation of glycine. The P protein binds the alpha-amino group of glycine through its pyridoxal phosphate cofactor; CO(2) is released and the remaining methylamine moiety is then transferred to the lipoamide cofactor of the H protein.</text>
</comment>
<comment type="catalytic activity">
    <reaction>
        <text>N(6)-[(R)-lipoyl]-L-lysyl-[glycine-cleavage complex H protein] + glycine + H(+) = N(6)-[(R)-S(8)-aminomethyldihydrolipoyl]-L-lysyl-[glycine-cleavage complex H protein] + CO2</text>
        <dbReference type="Rhea" id="RHEA:24304"/>
        <dbReference type="Rhea" id="RHEA-COMP:10494"/>
        <dbReference type="Rhea" id="RHEA-COMP:10495"/>
        <dbReference type="ChEBI" id="CHEBI:15378"/>
        <dbReference type="ChEBI" id="CHEBI:16526"/>
        <dbReference type="ChEBI" id="CHEBI:57305"/>
        <dbReference type="ChEBI" id="CHEBI:83099"/>
        <dbReference type="ChEBI" id="CHEBI:83143"/>
        <dbReference type="EC" id="1.4.4.2"/>
    </reaction>
</comment>
<comment type="cofactor">
    <cofactor evidence="1">
        <name>pyridoxal 5'-phosphate</name>
        <dbReference type="ChEBI" id="CHEBI:597326"/>
    </cofactor>
</comment>
<comment type="subcellular location">
    <subcellularLocation>
        <location evidence="3">Mitochondrion</location>
    </subcellularLocation>
</comment>
<comment type="similarity">
    <text evidence="4">Belongs to the GcvP family.</text>
</comment>
<feature type="transit peptide" description="Mitochondrion" evidence="2">
    <location>
        <begin position="1"/>
        <end position="49"/>
    </location>
</feature>
<feature type="chain" id="PRO_0000010751" description="Putative glycine dehydrogenase (decarboxylating), mitochondrial">
    <location>
        <begin position="50"/>
        <end position="1031"/>
    </location>
</feature>
<feature type="modified residue" description="N6-(pyridoxal phosphate)lysine" evidence="1">
    <location>
        <position position="783"/>
    </location>
</feature>
<keyword id="KW-0496">Mitochondrion</keyword>
<keyword id="KW-0560">Oxidoreductase</keyword>
<keyword id="KW-0663">Pyridoxal phosphate</keyword>
<keyword id="KW-1185">Reference proteome</keyword>
<keyword id="KW-0809">Transit peptide</keyword>
<evidence type="ECO:0000250" key="1"/>
<evidence type="ECO:0000255" key="2"/>
<evidence type="ECO:0000269" key="3">
    <source>
    </source>
</evidence>
<evidence type="ECO:0000305" key="4"/>
<gene>
    <name type="primary">gcv2</name>
    <name type="ORF">SPAC13G6.06c</name>
</gene>
<accession>Q09785</accession>
<organism>
    <name type="scientific">Schizosaccharomyces pombe (strain 972 / ATCC 24843)</name>
    <name type="common">Fission yeast</name>
    <dbReference type="NCBI Taxonomy" id="284812"/>
    <lineage>
        <taxon>Eukaryota</taxon>
        <taxon>Fungi</taxon>
        <taxon>Dikarya</taxon>
        <taxon>Ascomycota</taxon>
        <taxon>Taphrinomycotina</taxon>
        <taxon>Schizosaccharomycetes</taxon>
        <taxon>Schizosaccharomycetales</taxon>
        <taxon>Schizosaccharomycetaceae</taxon>
        <taxon>Schizosaccharomyces</taxon>
    </lineage>
</organism>
<sequence>MFDSFMKRNQLALIMFRACSKLQYHGVNTSLSRHLFLAKRNLSISSACLEAKNSQKFPALDTFEPRHIGPSKTDQQYQLESLGYKDFDSFLKDVIPDSVRTPESQLMAFGSVNPNEKNPPVNYSESEFTTLANNVANQNKLIKSFIGMGYYNVKLPAAIQRNVLENPEWYTQYTPYQAEISQGRLESMMNYQTMIADLTGLSISNASLLDEGTAAGEAMVMLMANDKKKRKTFLVDKNIYPNTLSVLRTRASGFGIKIELDNITPELITKSAKHVFGIFVQYPAADGSIFDYGHLAATARSFNMHVVAATDLLALTILKSPGEWGADVAVGSTQRFGLPMGYGGPHAGFFACSEEFKRKIPGRLIGLSKDRLENPAYRLALQTREQHIRREKATSNICTAQALLANMSAFYAIYHGPNGLQEIANRIYASTSFLKSALESSGYKIVNKSHFFDTLTIEVESADKVLAKALDHGYNLRKVDDSHVGLSLDETVCDKDIQALFSIFNINKSVDQYYMEIATSEPNGNSASTVDNLSICSLPENFRRTTLYLQHPVFNRYHSETELMRYIHHLQSKDLSLAHAMTPLGSCTMKLNAVTEMMPITNPLFANIHPYVPEEQAKGYRHVIEDLQLMLTTITGFDAACFQPNSGAAGEYTGLSVIRAYQRSIGQGHRNICLIPVSAHGTNPASAAMAGFTVIPVKCLNNGYLDMQDLKEKASKHADKLAAFMVTYPSTFGIFEPDVKEALEVIHEHGGQVYFDGANMNAMVGLCKAGDIGADVCHLNLHKTFCIPHGGGGPGVGPICVKKHLADFLPSHPVVSCGGKNGITSVSSSPFGSAGILPISWAYMRMMGLAGLRDASKAALLNANYMAKRLSSHYKLVYTNKNNLCAHEFILDAREFKATAGVDATDIAKRLQDYSFHAPTLSWPIANTLMIEPTESESMYEMDRFCDALISIRQEIREIEEGLQPKDNNLLVNAPHPQKDIASEKWDRPYTRERAVYPVPLLKERKFWPSVARLDDAYGDKNLFCTCSPVV</sequence>
<dbReference type="EC" id="1.4.4.2"/>
<dbReference type="EMBL" id="CU329670">
    <property type="protein sequence ID" value="CAA91099.2"/>
    <property type="molecule type" value="Genomic_DNA"/>
</dbReference>
<dbReference type="PIR" id="S62435">
    <property type="entry name" value="S62435"/>
</dbReference>
<dbReference type="RefSeq" id="NP_592832.2">
    <property type="nucleotide sequence ID" value="NM_001018233.2"/>
</dbReference>
<dbReference type="SMR" id="Q09785"/>
<dbReference type="BioGRID" id="279275">
    <property type="interactions" value="1"/>
</dbReference>
<dbReference type="FunCoup" id="Q09785">
    <property type="interactions" value="273"/>
</dbReference>
<dbReference type="STRING" id="284812.Q09785"/>
<dbReference type="PaxDb" id="4896-SPAC13G6.06c.1"/>
<dbReference type="EnsemblFungi" id="SPAC13G6.06c.1">
    <property type="protein sequence ID" value="SPAC13G6.06c.1:pep"/>
    <property type="gene ID" value="SPAC13G6.06c"/>
</dbReference>
<dbReference type="GeneID" id="2542828"/>
<dbReference type="KEGG" id="spo:2542828"/>
<dbReference type="PomBase" id="SPAC13G6.06c">
    <property type="gene designation" value="gcv2"/>
</dbReference>
<dbReference type="VEuPathDB" id="FungiDB:SPAC13G6.06c"/>
<dbReference type="eggNOG" id="KOG2040">
    <property type="taxonomic scope" value="Eukaryota"/>
</dbReference>
<dbReference type="HOGENOM" id="CLU_004620_3_2_1"/>
<dbReference type="InParanoid" id="Q09785"/>
<dbReference type="OMA" id="RNLICTC"/>
<dbReference type="Reactome" id="R-SPO-6783984">
    <property type="pathway name" value="Glycine degradation"/>
</dbReference>
<dbReference type="PRO" id="PR:Q09785"/>
<dbReference type="Proteomes" id="UP000002485">
    <property type="component" value="Chromosome I"/>
</dbReference>
<dbReference type="GO" id="GO:0005960">
    <property type="term" value="C:glycine cleavage complex"/>
    <property type="evidence" value="ECO:0000318"/>
    <property type="project" value="GO_Central"/>
</dbReference>
<dbReference type="GO" id="GO:0005759">
    <property type="term" value="C:mitochondrial matrix"/>
    <property type="evidence" value="ECO:0000305"/>
    <property type="project" value="PomBase"/>
</dbReference>
<dbReference type="GO" id="GO:0005739">
    <property type="term" value="C:mitochondrion"/>
    <property type="evidence" value="ECO:0007005"/>
    <property type="project" value="PomBase"/>
</dbReference>
<dbReference type="GO" id="GO:0016594">
    <property type="term" value="F:glycine binding"/>
    <property type="evidence" value="ECO:0000318"/>
    <property type="project" value="GO_Central"/>
</dbReference>
<dbReference type="GO" id="GO:0004375">
    <property type="term" value="F:glycine dehydrogenase (decarboxylating) activity"/>
    <property type="evidence" value="ECO:0000318"/>
    <property type="project" value="GO_Central"/>
</dbReference>
<dbReference type="GO" id="GO:0030170">
    <property type="term" value="F:pyridoxal phosphate binding"/>
    <property type="evidence" value="ECO:0000318"/>
    <property type="project" value="GO_Central"/>
</dbReference>
<dbReference type="GO" id="GO:0019464">
    <property type="term" value="P:glycine decarboxylation via glycine cleavage system"/>
    <property type="evidence" value="ECO:0000318"/>
    <property type="project" value="GO_Central"/>
</dbReference>
<dbReference type="CDD" id="cd00613">
    <property type="entry name" value="GDC-P"/>
    <property type="match status" value="2"/>
</dbReference>
<dbReference type="FunFam" id="3.40.640.10:FF:000005">
    <property type="entry name" value="Glycine dehydrogenase (decarboxylating), mitochondrial"/>
    <property type="match status" value="1"/>
</dbReference>
<dbReference type="FunFam" id="3.90.1150.10:FF:000007">
    <property type="entry name" value="Glycine dehydrogenase (decarboxylating), mitochondrial"/>
    <property type="match status" value="1"/>
</dbReference>
<dbReference type="FunFam" id="3.40.640.10:FF:000007">
    <property type="entry name" value="glycine dehydrogenase (Decarboxylating), mitochondrial"/>
    <property type="match status" value="1"/>
</dbReference>
<dbReference type="Gene3D" id="3.90.1150.10">
    <property type="entry name" value="Aspartate Aminotransferase, domain 1"/>
    <property type="match status" value="2"/>
</dbReference>
<dbReference type="Gene3D" id="3.40.640.10">
    <property type="entry name" value="Type I PLP-dependent aspartate aminotransferase-like (Major domain)"/>
    <property type="match status" value="2"/>
</dbReference>
<dbReference type="InterPro" id="IPR003437">
    <property type="entry name" value="GcvP"/>
</dbReference>
<dbReference type="InterPro" id="IPR049316">
    <property type="entry name" value="GDC-P_C"/>
</dbReference>
<dbReference type="InterPro" id="IPR049315">
    <property type="entry name" value="GDC-P_N"/>
</dbReference>
<dbReference type="InterPro" id="IPR020581">
    <property type="entry name" value="GDC_P"/>
</dbReference>
<dbReference type="InterPro" id="IPR015424">
    <property type="entry name" value="PyrdxlP-dep_Trfase"/>
</dbReference>
<dbReference type="InterPro" id="IPR015421">
    <property type="entry name" value="PyrdxlP-dep_Trfase_major"/>
</dbReference>
<dbReference type="InterPro" id="IPR015422">
    <property type="entry name" value="PyrdxlP-dep_Trfase_small"/>
</dbReference>
<dbReference type="NCBIfam" id="TIGR00461">
    <property type="entry name" value="gcvP"/>
    <property type="match status" value="1"/>
</dbReference>
<dbReference type="NCBIfam" id="NF003346">
    <property type="entry name" value="PRK04366.1"/>
    <property type="match status" value="1"/>
</dbReference>
<dbReference type="PANTHER" id="PTHR11773:SF1">
    <property type="entry name" value="GLYCINE DEHYDROGENASE (DECARBOXYLATING), MITOCHONDRIAL"/>
    <property type="match status" value="1"/>
</dbReference>
<dbReference type="PANTHER" id="PTHR11773">
    <property type="entry name" value="GLYCINE DEHYDROGENASE, DECARBOXYLATING"/>
    <property type="match status" value="1"/>
</dbReference>
<dbReference type="Pfam" id="PF21478">
    <property type="entry name" value="GcvP2_C"/>
    <property type="match status" value="1"/>
</dbReference>
<dbReference type="Pfam" id="PF02347">
    <property type="entry name" value="GDC-P"/>
    <property type="match status" value="2"/>
</dbReference>
<dbReference type="SUPFAM" id="SSF53383">
    <property type="entry name" value="PLP-dependent transferases"/>
    <property type="match status" value="2"/>
</dbReference>
<reference key="1">
    <citation type="journal article" date="2002" name="Nature">
        <title>The genome sequence of Schizosaccharomyces pombe.</title>
        <authorList>
            <person name="Wood V."/>
            <person name="Gwilliam R."/>
            <person name="Rajandream M.A."/>
            <person name="Lyne M.H."/>
            <person name="Lyne R."/>
            <person name="Stewart A."/>
            <person name="Sgouros J.G."/>
            <person name="Peat N."/>
            <person name="Hayles J."/>
            <person name="Baker S.G."/>
            <person name="Basham D."/>
            <person name="Bowman S."/>
            <person name="Brooks K."/>
            <person name="Brown D."/>
            <person name="Brown S."/>
            <person name="Chillingworth T."/>
            <person name="Churcher C.M."/>
            <person name="Collins M."/>
            <person name="Connor R."/>
            <person name="Cronin A."/>
            <person name="Davis P."/>
            <person name="Feltwell T."/>
            <person name="Fraser A."/>
            <person name="Gentles S."/>
            <person name="Goble A."/>
            <person name="Hamlin N."/>
            <person name="Harris D.E."/>
            <person name="Hidalgo J."/>
            <person name="Hodgson G."/>
            <person name="Holroyd S."/>
            <person name="Hornsby T."/>
            <person name="Howarth S."/>
            <person name="Huckle E.J."/>
            <person name="Hunt S."/>
            <person name="Jagels K."/>
            <person name="James K.D."/>
            <person name="Jones L."/>
            <person name="Jones M."/>
            <person name="Leather S."/>
            <person name="McDonald S."/>
            <person name="McLean J."/>
            <person name="Mooney P."/>
            <person name="Moule S."/>
            <person name="Mungall K.L."/>
            <person name="Murphy L.D."/>
            <person name="Niblett D."/>
            <person name="Odell C."/>
            <person name="Oliver K."/>
            <person name="O'Neil S."/>
            <person name="Pearson D."/>
            <person name="Quail M.A."/>
            <person name="Rabbinowitsch E."/>
            <person name="Rutherford K.M."/>
            <person name="Rutter S."/>
            <person name="Saunders D."/>
            <person name="Seeger K."/>
            <person name="Sharp S."/>
            <person name="Skelton J."/>
            <person name="Simmonds M.N."/>
            <person name="Squares R."/>
            <person name="Squares S."/>
            <person name="Stevens K."/>
            <person name="Taylor K."/>
            <person name="Taylor R.G."/>
            <person name="Tivey A."/>
            <person name="Walsh S.V."/>
            <person name="Warren T."/>
            <person name="Whitehead S."/>
            <person name="Woodward J.R."/>
            <person name="Volckaert G."/>
            <person name="Aert R."/>
            <person name="Robben J."/>
            <person name="Grymonprez B."/>
            <person name="Weltjens I."/>
            <person name="Vanstreels E."/>
            <person name="Rieger M."/>
            <person name="Schaefer M."/>
            <person name="Mueller-Auer S."/>
            <person name="Gabel C."/>
            <person name="Fuchs M."/>
            <person name="Duesterhoeft A."/>
            <person name="Fritzc C."/>
            <person name="Holzer E."/>
            <person name="Moestl D."/>
            <person name="Hilbert H."/>
            <person name="Borzym K."/>
            <person name="Langer I."/>
            <person name="Beck A."/>
            <person name="Lehrach H."/>
            <person name="Reinhardt R."/>
            <person name="Pohl T.M."/>
            <person name="Eger P."/>
            <person name="Zimmermann W."/>
            <person name="Wedler H."/>
            <person name="Wambutt R."/>
            <person name="Purnelle B."/>
            <person name="Goffeau A."/>
            <person name="Cadieu E."/>
            <person name="Dreano S."/>
            <person name="Gloux S."/>
            <person name="Lelaure V."/>
            <person name="Mottier S."/>
            <person name="Galibert F."/>
            <person name="Aves S.J."/>
            <person name="Xiang Z."/>
            <person name="Hunt C."/>
            <person name="Moore K."/>
            <person name="Hurst S.M."/>
            <person name="Lucas M."/>
            <person name="Rochet M."/>
            <person name="Gaillardin C."/>
            <person name="Tallada V.A."/>
            <person name="Garzon A."/>
            <person name="Thode G."/>
            <person name="Daga R.R."/>
            <person name="Cruzado L."/>
            <person name="Jimenez J."/>
            <person name="Sanchez M."/>
            <person name="del Rey F."/>
            <person name="Benito J."/>
            <person name="Dominguez A."/>
            <person name="Revuelta J.L."/>
            <person name="Moreno S."/>
            <person name="Armstrong J."/>
            <person name="Forsburg S.L."/>
            <person name="Cerutti L."/>
            <person name="Lowe T."/>
            <person name="McCombie W.R."/>
            <person name="Paulsen I."/>
            <person name="Potashkin J."/>
            <person name="Shpakovski G.V."/>
            <person name="Ussery D."/>
            <person name="Barrell B.G."/>
            <person name="Nurse P."/>
        </authorList>
    </citation>
    <scope>NUCLEOTIDE SEQUENCE [LARGE SCALE GENOMIC DNA]</scope>
    <source>
        <strain>972 / ATCC 24843</strain>
    </source>
</reference>
<reference key="2">
    <citation type="journal article" date="2011" name="Science">
        <title>Comparative functional genomics of the fission yeasts.</title>
        <authorList>
            <person name="Rhind N."/>
            <person name="Chen Z."/>
            <person name="Yassour M."/>
            <person name="Thompson D.A."/>
            <person name="Haas B.J."/>
            <person name="Habib N."/>
            <person name="Wapinski I."/>
            <person name="Roy S."/>
            <person name="Lin M.F."/>
            <person name="Heiman D.I."/>
            <person name="Young S.K."/>
            <person name="Furuya K."/>
            <person name="Guo Y."/>
            <person name="Pidoux A."/>
            <person name="Chen H.M."/>
            <person name="Robbertse B."/>
            <person name="Goldberg J.M."/>
            <person name="Aoki K."/>
            <person name="Bayne E.H."/>
            <person name="Berlin A.M."/>
            <person name="Desjardins C.A."/>
            <person name="Dobbs E."/>
            <person name="Dukaj L."/>
            <person name="Fan L."/>
            <person name="FitzGerald M.G."/>
            <person name="French C."/>
            <person name="Gujja S."/>
            <person name="Hansen K."/>
            <person name="Keifenheim D."/>
            <person name="Levin J.Z."/>
            <person name="Mosher R.A."/>
            <person name="Mueller C.A."/>
            <person name="Pfiffner J."/>
            <person name="Priest M."/>
            <person name="Russ C."/>
            <person name="Smialowska A."/>
            <person name="Swoboda P."/>
            <person name="Sykes S.M."/>
            <person name="Vaughn M."/>
            <person name="Vengrova S."/>
            <person name="Yoder R."/>
            <person name="Zeng Q."/>
            <person name="Allshire R."/>
            <person name="Baulcombe D."/>
            <person name="Birren B.W."/>
            <person name="Brown W."/>
            <person name="Ekwall K."/>
            <person name="Kellis M."/>
            <person name="Leatherwood J."/>
            <person name="Levin H."/>
            <person name="Margalit H."/>
            <person name="Martienssen R."/>
            <person name="Nieduszynski C.A."/>
            <person name="Spatafora J.W."/>
            <person name="Friedman N."/>
            <person name="Dalgaard J.Z."/>
            <person name="Baumann P."/>
            <person name="Niki H."/>
            <person name="Regev A."/>
            <person name="Nusbaum C."/>
        </authorList>
    </citation>
    <scope>REVISION OF GENE MODEL</scope>
</reference>
<reference key="3">
    <citation type="journal article" date="2006" name="Nat. Biotechnol.">
        <title>ORFeome cloning and global analysis of protein localization in the fission yeast Schizosaccharomyces pombe.</title>
        <authorList>
            <person name="Matsuyama A."/>
            <person name="Arai R."/>
            <person name="Yashiroda Y."/>
            <person name="Shirai A."/>
            <person name="Kamata A."/>
            <person name="Sekido S."/>
            <person name="Kobayashi Y."/>
            <person name="Hashimoto A."/>
            <person name="Hamamoto M."/>
            <person name="Hiraoka Y."/>
            <person name="Horinouchi S."/>
            <person name="Yoshida M."/>
        </authorList>
    </citation>
    <scope>SUBCELLULAR LOCATION [LARGE SCALE ANALYSIS]</scope>
</reference>